<gene>
    <name type="primary">cycM</name>
    <name type="ordered locus">RF_1030</name>
</gene>
<evidence type="ECO:0000250" key="1"/>
<evidence type="ECO:0000255" key="2"/>
<evidence type="ECO:0000255" key="3">
    <source>
        <dbReference type="PROSITE-ProRule" id="PRU00433"/>
    </source>
</evidence>
<evidence type="ECO:0000305" key="4"/>
<accession>Q4UKP6</accession>
<name>CYCM_RICFE</name>
<dbReference type="EMBL" id="CP000053">
    <property type="protein sequence ID" value="AAY61881.1"/>
    <property type="molecule type" value="Genomic_DNA"/>
</dbReference>
<dbReference type="SMR" id="Q4UKP6"/>
<dbReference type="STRING" id="315456.RF_1030"/>
<dbReference type="KEGG" id="rfe:RF_1030"/>
<dbReference type="eggNOG" id="COG3474">
    <property type="taxonomic scope" value="Bacteria"/>
</dbReference>
<dbReference type="HOGENOM" id="CLU_060944_4_0_5"/>
<dbReference type="OrthoDB" id="9805828at2"/>
<dbReference type="Proteomes" id="UP000008548">
    <property type="component" value="Chromosome"/>
</dbReference>
<dbReference type="GO" id="GO:0005886">
    <property type="term" value="C:plasma membrane"/>
    <property type="evidence" value="ECO:0007669"/>
    <property type="project" value="UniProtKB-SubCell"/>
</dbReference>
<dbReference type="GO" id="GO:0009055">
    <property type="term" value="F:electron transfer activity"/>
    <property type="evidence" value="ECO:0007669"/>
    <property type="project" value="InterPro"/>
</dbReference>
<dbReference type="GO" id="GO:0020037">
    <property type="term" value="F:heme binding"/>
    <property type="evidence" value="ECO:0007669"/>
    <property type="project" value="InterPro"/>
</dbReference>
<dbReference type="GO" id="GO:0046872">
    <property type="term" value="F:metal ion binding"/>
    <property type="evidence" value="ECO:0007669"/>
    <property type="project" value="UniProtKB-KW"/>
</dbReference>
<dbReference type="FunFam" id="1.10.760.10:FF:000026">
    <property type="entry name" value="Cytochrome C, membrane-bound"/>
    <property type="match status" value="1"/>
</dbReference>
<dbReference type="Gene3D" id="1.10.760.10">
    <property type="entry name" value="Cytochrome c-like domain"/>
    <property type="match status" value="1"/>
</dbReference>
<dbReference type="InterPro" id="IPR009056">
    <property type="entry name" value="Cyt_c-like_dom"/>
</dbReference>
<dbReference type="InterPro" id="IPR036909">
    <property type="entry name" value="Cyt_c-like_dom_sf"/>
</dbReference>
<dbReference type="InterPro" id="IPR002327">
    <property type="entry name" value="Cyt_c_1A/1B"/>
</dbReference>
<dbReference type="PANTHER" id="PTHR11961">
    <property type="entry name" value="CYTOCHROME C"/>
    <property type="match status" value="1"/>
</dbReference>
<dbReference type="Pfam" id="PF00034">
    <property type="entry name" value="Cytochrom_C"/>
    <property type="match status" value="1"/>
</dbReference>
<dbReference type="PRINTS" id="PR00604">
    <property type="entry name" value="CYTCHRMECIAB"/>
</dbReference>
<dbReference type="SUPFAM" id="SSF46626">
    <property type="entry name" value="Cytochrome c"/>
    <property type="match status" value="1"/>
</dbReference>
<dbReference type="PROSITE" id="PS51007">
    <property type="entry name" value="CYTC"/>
    <property type="match status" value="1"/>
</dbReference>
<protein>
    <recommendedName>
        <fullName>Cytochrome c homolog</fullName>
    </recommendedName>
</protein>
<keyword id="KW-1003">Cell membrane</keyword>
<keyword id="KW-0249">Electron transport</keyword>
<keyword id="KW-0349">Heme</keyword>
<keyword id="KW-0408">Iron</keyword>
<keyword id="KW-0472">Membrane</keyword>
<keyword id="KW-0479">Metal-binding</keyword>
<keyword id="KW-0735">Signal-anchor</keyword>
<keyword id="KW-0812">Transmembrane</keyword>
<keyword id="KW-1133">Transmembrane helix</keyword>
<keyword id="KW-0813">Transport</keyword>
<organism>
    <name type="scientific">Rickettsia felis (strain ATCC VR-1525 / URRWXCal2)</name>
    <name type="common">Rickettsia azadi</name>
    <dbReference type="NCBI Taxonomy" id="315456"/>
    <lineage>
        <taxon>Bacteria</taxon>
        <taxon>Pseudomonadati</taxon>
        <taxon>Pseudomonadota</taxon>
        <taxon>Alphaproteobacteria</taxon>
        <taxon>Rickettsiales</taxon>
        <taxon>Rickettsiaceae</taxon>
        <taxon>Rickettsieae</taxon>
        <taxon>Rickettsia</taxon>
        <taxon>spotted fever group</taxon>
    </lineage>
</organism>
<reference key="1">
    <citation type="journal article" date="2005" name="PLoS Biol.">
        <title>The genome sequence of Rickettsia felis identifies the first putative conjugative plasmid in an obligate intracellular parasite.</title>
        <authorList>
            <person name="Ogata H."/>
            <person name="Renesto P."/>
            <person name="Audic S."/>
            <person name="Robert C."/>
            <person name="Blanc G."/>
            <person name="Fournier P.-E."/>
            <person name="Parinello H."/>
            <person name="Claverie J.-M."/>
            <person name="Raoult D."/>
        </authorList>
    </citation>
    <scope>NUCLEOTIDE SEQUENCE [LARGE SCALE GENOMIC DNA]</scope>
    <source>
        <strain>ATCC VR-1525 / URRWXCal2</strain>
    </source>
</reference>
<proteinExistence type="inferred from homology"/>
<comment type="function">
    <text evidence="1">May be involved in electron transfer from bc1 complex to aa3.</text>
</comment>
<comment type="subcellular location">
    <subcellularLocation>
        <location evidence="1">Cell membrane</location>
        <topology evidence="1">Single-pass type II membrane protein</topology>
    </subcellularLocation>
</comment>
<comment type="PTM">
    <text evidence="1">Binds 1 heme c group covalently per subunit.</text>
</comment>
<comment type="similarity">
    <text evidence="4">Belongs to the cytochrome c family.</text>
</comment>
<sequence length="175" mass="19051">MSGKELNKIVAAILFASLIAMMVGFVANILYKPTLELQHRGYSVAVQESSENQNTTASEQAPVNIPELMKTANADNGREIAKKCLVCHSLDKDGPNKLGPHLWDVAGRPKASIADYKYSPALSKLGGVWDDDSLFAFLHKPSSYAPGTKMSFAGISKPQDIADVILFLKTYVHDK</sequence>
<feature type="chain" id="PRO_0000288757" description="Cytochrome c homolog">
    <location>
        <begin position="1"/>
        <end position="175"/>
    </location>
</feature>
<feature type="topological domain" description="Cytoplasmic" evidence="2">
    <location>
        <begin position="1"/>
        <end position="8"/>
    </location>
</feature>
<feature type="transmembrane region" description="Helical; Signal-anchor" evidence="2">
    <location>
        <begin position="9"/>
        <end position="29"/>
    </location>
</feature>
<feature type="topological domain" description="Periplasmic" evidence="2">
    <location>
        <begin position="30"/>
        <end position="175"/>
    </location>
</feature>
<feature type="binding site" description="covalent" evidence="3">
    <location>
        <position position="84"/>
    </location>
    <ligand>
        <name>heme c</name>
        <dbReference type="ChEBI" id="CHEBI:61717"/>
    </ligand>
</feature>
<feature type="binding site" description="covalent" evidence="3">
    <location>
        <position position="87"/>
    </location>
    <ligand>
        <name>heme c</name>
        <dbReference type="ChEBI" id="CHEBI:61717"/>
    </ligand>
</feature>
<feature type="binding site" description="axial binding residue" evidence="3">
    <location>
        <position position="88"/>
    </location>
    <ligand>
        <name>heme c</name>
        <dbReference type="ChEBI" id="CHEBI:61717"/>
    </ligand>
    <ligandPart>
        <name>Fe</name>
        <dbReference type="ChEBI" id="CHEBI:18248"/>
    </ligandPart>
</feature>
<feature type="binding site" description="axial binding residue" evidence="3">
    <location>
        <position position="150"/>
    </location>
    <ligand>
        <name>heme c</name>
        <dbReference type="ChEBI" id="CHEBI:61717"/>
    </ligand>
    <ligandPart>
        <name>Fe</name>
        <dbReference type="ChEBI" id="CHEBI:18248"/>
    </ligandPart>
</feature>